<comment type="function">
    <text evidence="1">Thiol-specific peroxidase that catalyzes the reduction of hydrogen peroxide and organic hydroperoxides to water and alcohols, respectively. Plays a role in cell protection against oxidative stress by detoxifying peroxides.</text>
</comment>
<comment type="catalytic activity">
    <reaction evidence="1">
        <text>a hydroperoxide + NADH + H(+) = an alcohol + NAD(+) + H2O</text>
        <dbReference type="Rhea" id="RHEA:62628"/>
        <dbReference type="ChEBI" id="CHEBI:15377"/>
        <dbReference type="ChEBI" id="CHEBI:15378"/>
        <dbReference type="ChEBI" id="CHEBI:30879"/>
        <dbReference type="ChEBI" id="CHEBI:35924"/>
        <dbReference type="ChEBI" id="CHEBI:57540"/>
        <dbReference type="ChEBI" id="CHEBI:57945"/>
        <dbReference type="EC" id="1.11.1.26"/>
    </reaction>
</comment>
<comment type="subunit">
    <text evidence="1">Homodimer; disulfide-linked, upon oxidation. 5 homodimers assemble to form a ring-like decamer.</text>
</comment>
<comment type="subcellular location">
    <subcellularLocation>
        <location evidence="2">Cytoplasm</location>
    </subcellularLocation>
</comment>
<comment type="miscellaneous">
    <text evidence="1">The active site is a conserved redox-active cysteine residue, the peroxidatic cysteine (C(P)), which makes the nucleophilic attack on the peroxide substrate. The peroxide oxidizes the C(P)-SH to cysteine sulfenic acid (C(P)-SOH), which then reacts with another cysteine residue, the resolving cysteine (C(R)), to form a disulfide bridge. The disulfide is subsequently reduced by an appropriate electron donor to complete the catalytic cycle. In this typical 2-Cys peroxiredoxin, C(R) is provided by the other dimeric subunit to form an intersubunit disulfide. The disulfide is subsequently reduced by AhpF.</text>
</comment>
<comment type="similarity">
    <text evidence="4">Belongs to the peroxiredoxin family. AhpC/Prx1 subfamily.</text>
</comment>
<accession>P26830</accession>
<name>AHPC_FERAY</name>
<reference key="1">
    <citation type="journal article" date="1991" name="J. Biochem.">
        <title>Nucleotide sequence of the gene encoding NADH dehydrogenase from an alkalophile, Bacillus sp. strain YN-1.</title>
        <authorList>
            <person name="Xu X."/>
            <person name="Koyama N."/>
            <person name="Cui M."/>
            <person name="Yamagishi A."/>
            <person name="Nosoh Y."/>
            <person name="Oshima T."/>
        </authorList>
    </citation>
    <scope>NUCLEOTIDE SEQUENCE [GENOMIC DNA]</scope>
</reference>
<dbReference type="EC" id="1.11.1.26" evidence="1"/>
<dbReference type="EMBL" id="D10701">
    <property type="protein sequence ID" value="BAA01544.1"/>
    <property type="molecule type" value="Genomic_DNA"/>
</dbReference>
<dbReference type="SMR" id="P26830"/>
<dbReference type="GO" id="GO:0005829">
    <property type="term" value="C:cytosol"/>
    <property type="evidence" value="ECO:0007669"/>
    <property type="project" value="TreeGrafter"/>
</dbReference>
<dbReference type="GO" id="GO:0102039">
    <property type="term" value="F:NADH-dependent peroxiredoxin activity"/>
    <property type="evidence" value="ECO:0007669"/>
    <property type="project" value="UniProtKB-EC"/>
</dbReference>
<dbReference type="GO" id="GO:0008379">
    <property type="term" value="F:thioredoxin peroxidase activity"/>
    <property type="evidence" value="ECO:0007669"/>
    <property type="project" value="TreeGrafter"/>
</dbReference>
<dbReference type="GO" id="GO:0045454">
    <property type="term" value="P:cell redox homeostasis"/>
    <property type="evidence" value="ECO:0007669"/>
    <property type="project" value="TreeGrafter"/>
</dbReference>
<dbReference type="GO" id="GO:0033554">
    <property type="term" value="P:cellular response to stress"/>
    <property type="evidence" value="ECO:0007669"/>
    <property type="project" value="TreeGrafter"/>
</dbReference>
<dbReference type="GO" id="GO:0042744">
    <property type="term" value="P:hydrogen peroxide catabolic process"/>
    <property type="evidence" value="ECO:0007669"/>
    <property type="project" value="TreeGrafter"/>
</dbReference>
<dbReference type="GO" id="GO:0006979">
    <property type="term" value="P:response to oxidative stress"/>
    <property type="evidence" value="ECO:0007669"/>
    <property type="project" value="InterPro"/>
</dbReference>
<dbReference type="CDD" id="cd03015">
    <property type="entry name" value="PRX_Typ2cys"/>
    <property type="match status" value="1"/>
</dbReference>
<dbReference type="FunFam" id="3.40.30.10:FF:000002">
    <property type="entry name" value="Alkyl hydroperoxide reductase C"/>
    <property type="match status" value="1"/>
</dbReference>
<dbReference type="Gene3D" id="3.40.30.10">
    <property type="entry name" value="Glutaredoxin"/>
    <property type="match status" value="1"/>
</dbReference>
<dbReference type="InterPro" id="IPR017559">
    <property type="entry name" value="AhpC"/>
</dbReference>
<dbReference type="InterPro" id="IPR000866">
    <property type="entry name" value="AhpC/TSA"/>
</dbReference>
<dbReference type="InterPro" id="IPR050217">
    <property type="entry name" value="Peroxiredoxin"/>
</dbReference>
<dbReference type="InterPro" id="IPR024706">
    <property type="entry name" value="Peroxiredoxin_AhpC-typ"/>
</dbReference>
<dbReference type="InterPro" id="IPR019479">
    <property type="entry name" value="Peroxiredoxin_C"/>
</dbReference>
<dbReference type="InterPro" id="IPR036249">
    <property type="entry name" value="Thioredoxin-like_sf"/>
</dbReference>
<dbReference type="InterPro" id="IPR013766">
    <property type="entry name" value="Thioredoxin_domain"/>
</dbReference>
<dbReference type="NCBIfam" id="TIGR03137">
    <property type="entry name" value="AhpC"/>
    <property type="match status" value="1"/>
</dbReference>
<dbReference type="PANTHER" id="PTHR10681:SF121">
    <property type="entry name" value="ALKYL HYDROPEROXIDE REDUCTASE C"/>
    <property type="match status" value="1"/>
</dbReference>
<dbReference type="PANTHER" id="PTHR10681">
    <property type="entry name" value="THIOREDOXIN PEROXIDASE"/>
    <property type="match status" value="1"/>
</dbReference>
<dbReference type="Pfam" id="PF10417">
    <property type="entry name" value="1-cysPrx_C"/>
    <property type="match status" value="1"/>
</dbReference>
<dbReference type="Pfam" id="PF00578">
    <property type="entry name" value="AhpC-TSA"/>
    <property type="match status" value="1"/>
</dbReference>
<dbReference type="PIRSF" id="PIRSF000239">
    <property type="entry name" value="AHPC"/>
    <property type="match status" value="1"/>
</dbReference>
<dbReference type="SUPFAM" id="SSF52833">
    <property type="entry name" value="Thioredoxin-like"/>
    <property type="match status" value="1"/>
</dbReference>
<dbReference type="PROSITE" id="PS51352">
    <property type="entry name" value="THIOREDOXIN_2"/>
    <property type="match status" value="1"/>
</dbReference>
<sequence>EFIEVSEESFKGQWSVLCFYPADFTFVCPTELEDLQNEYAALKELGVEVFSASTDTHFTHKGWHDSSETIGKITYAMIGDPSQTLSRNFDVLNEVSGLADRGTFIIDPDGVVQAAEINAEGIGRDASTLVNKIKAAQYVRNNPGEVCPAKWQEGDETLKPSLDLVGKI</sequence>
<proteinExistence type="inferred from homology"/>
<protein>
    <recommendedName>
        <fullName>Alkyl hydroperoxide reductase C</fullName>
        <ecNumber evidence="1">1.11.1.26</ecNumber>
    </recommendedName>
    <alternativeName>
        <fullName>Peroxiredoxin</fullName>
    </alternativeName>
    <alternativeName>
        <fullName>Thioredoxin peroxidase</fullName>
    </alternativeName>
</protein>
<organism>
    <name type="scientific">Ferdinandcohnia aciditolerans (strain JCM 32973 / CCTCC AB 2017280 / YN-1)</name>
    <name type="common">Bacillus aciditolerans</name>
    <dbReference type="NCBI Taxonomy" id="72581"/>
    <lineage>
        <taxon>Bacteria</taxon>
        <taxon>Bacillati</taxon>
        <taxon>Bacillota</taxon>
        <taxon>Bacilli</taxon>
        <taxon>Bacillales</taxon>
        <taxon>Bacillaceae</taxon>
        <taxon>Fredinandcohnia</taxon>
    </lineage>
</organism>
<evidence type="ECO:0000250" key="1">
    <source>
        <dbReference type="UniProtKB" id="P0A251"/>
    </source>
</evidence>
<evidence type="ECO:0000250" key="2">
    <source>
        <dbReference type="UniProtKB" id="P0AE08"/>
    </source>
</evidence>
<evidence type="ECO:0000255" key="3">
    <source>
        <dbReference type="PROSITE-ProRule" id="PRU00691"/>
    </source>
</evidence>
<evidence type="ECO:0000305" key="4"/>
<keyword id="KW-0049">Antioxidant</keyword>
<keyword id="KW-0963">Cytoplasm</keyword>
<keyword id="KW-1015">Disulfide bond</keyword>
<keyword id="KW-0560">Oxidoreductase</keyword>
<keyword id="KW-0575">Peroxidase</keyword>
<keyword id="KW-0676">Redox-active center</keyword>
<feature type="chain" id="PRO_0000135132" description="Alkyl hydroperoxide reductase C">
    <location>
        <begin position="1" status="less than"/>
        <end position="168"/>
    </location>
</feature>
<feature type="domain" description="Thioredoxin" evidence="3">
    <location>
        <begin position="1" status="less than"/>
        <end position="138"/>
    </location>
</feature>
<feature type="active site" description="Cysteine sulfenic acid (-SOH) intermediate" evidence="1">
    <location>
        <position position="28"/>
    </location>
</feature>
<feature type="disulfide bond" description="Interchain (with C-147); in linked form" evidence="1">
    <location>
        <position position="28"/>
    </location>
</feature>
<feature type="disulfide bond" description="Interchain (with C-28); in linked form" evidence="1">
    <location>
        <position position="147"/>
    </location>
</feature>
<feature type="non-terminal residue">
    <location>
        <position position="1"/>
    </location>
</feature>